<proteinExistence type="inferred from homology"/>
<protein>
    <recommendedName>
        <fullName evidence="1">DNA replication and repair protein RecF</fullName>
    </recommendedName>
</protein>
<sequence length="365" mass="40962">MHLNAIAISAFRNIDHVEISFDRRFNVLHGANGQGKTSVLEAIYLLGTMKSFRMAKAHDLIAWNAPHSLVRGDIDKAGVRREIALYLGREGRKARIDRKPVTKLADFFGAVNAVVFSPEEIGMARGGPELRRRYLDRAIFNGDLGYLLLHHEYHRLLKQRNALLRRGERDGLEVWTIQLAEAGARLMVKRRAYLSQIEPLVRQFYRDIAGAGQEVGLAYRCHGLASAEGERDCAAALRELMAAHEAEELRRGATGVGPHRDDVDFILNGRVIRHHGSQGEQRSFVLAVKMAEIEYLERLNGAPPVLLLDDISSELDPERNANLMTFLRGKRMQVFITTTDVSTLRLEGIDTHASFRVSRGTVTPV</sequence>
<accession>Q74H90</accession>
<name>RECF_GEOSL</name>
<keyword id="KW-0067">ATP-binding</keyword>
<keyword id="KW-0963">Cytoplasm</keyword>
<keyword id="KW-0227">DNA damage</keyword>
<keyword id="KW-0234">DNA repair</keyword>
<keyword id="KW-0235">DNA replication</keyword>
<keyword id="KW-0238">DNA-binding</keyword>
<keyword id="KW-0547">Nucleotide-binding</keyword>
<keyword id="KW-1185">Reference proteome</keyword>
<keyword id="KW-0742">SOS response</keyword>
<feature type="chain" id="PRO_0000236120" description="DNA replication and repair protein RecF">
    <location>
        <begin position="1"/>
        <end position="365"/>
    </location>
</feature>
<feature type="binding site" evidence="1">
    <location>
        <begin position="30"/>
        <end position="37"/>
    </location>
    <ligand>
        <name>ATP</name>
        <dbReference type="ChEBI" id="CHEBI:30616"/>
    </ligand>
</feature>
<reference key="1">
    <citation type="journal article" date="2003" name="Science">
        <title>Genome of Geobacter sulfurreducens: metal reduction in subsurface environments.</title>
        <authorList>
            <person name="Methe B.A."/>
            <person name="Nelson K.E."/>
            <person name="Eisen J.A."/>
            <person name="Paulsen I.T."/>
            <person name="Nelson W.C."/>
            <person name="Heidelberg J.F."/>
            <person name="Wu D."/>
            <person name="Wu M."/>
            <person name="Ward N.L."/>
            <person name="Beanan M.J."/>
            <person name="Dodson R.J."/>
            <person name="Madupu R."/>
            <person name="Brinkac L.M."/>
            <person name="Daugherty S.C."/>
            <person name="DeBoy R.T."/>
            <person name="Durkin A.S."/>
            <person name="Gwinn M.L."/>
            <person name="Kolonay J.F."/>
            <person name="Sullivan S.A."/>
            <person name="Haft D.H."/>
            <person name="Selengut J."/>
            <person name="Davidsen T.M."/>
            <person name="Zafar N."/>
            <person name="White O."/>
            <person name="Tran B."/>
            <person name="Romero C."/>
            <person name="Forberger H.A."/>
            <person name="Weidman J.F."/>
            <person name="Khouri H.M."/>
            <person name="Feldblyum T.V."/>
            <person name="Utterback T.R."/>
            <person name="Van Aken S.E."/>
            <person name="Lovley D.R."/>
            <person name="Fraser C.M."/>
        </authorList>
    </citation>
    <scope>NUCLEOTIDE SEQUENCE [LARGE SCALE GENOMIC DNA]</scope>
    <source>
        <strain>ATCC 51573 / DSM 12127 / PCA</strain>
    </source>
</reference>
<evidence type="ECO:0000255" key="1">
    <source>
        <dbReference type="HAMAP-Rule" id="MF_00365"/>
    </source>
</evidence>
<gene>
    <name evidence="1" type="primary">recF</name>
    <name type="ordered locus">GSU0002</name>
</gene>
<dbReference type="EMBL" id="AE017180">
    <property type="protein sequence ID" value="AAR33337.1"/>
    <property type="molecule type" value="Genomic_DNA"/>
</dbReference>
<dbReference type="RefSeq" id="NP_951064.1">
    <property type="nucleotide sequence ID" value="NC_002939.5"/>
</dbReference>
<dbReference type="RefSeq" id="WP_010940680.1">
    <property type="nucleotide sequence ID" value="NC_002939.5"/>
</dbReference>
<dbReference type="SMR" id="Q74H90"/>
<dbReference type="FunCoup" id="Q74H90">
    <property type="interactions" value="210"/>
</dbReference>
<dbReference type="STRING" id="243231.GSU0002"/>
<dbReference type="EnsemblBacteria" id="AAR33337">
    <property type="protein sequence ID" value="AAR33337"/>
    <property type="gene ID" value="GSU0002"/>
</dbReference>
<dbReference type="KEGG" id="gsu:GSU0002"/>
<dbReference type="PATRIC" id="fig|243231.5.peg.3"/>
<dbReference type="eggNOG" id="COG1195">
    <property type="taxonomic scope" value="Bacteria"/>
</dbReference>
<dbReference type="HOGENOM" id="CLU_040267_0_1_7"/>
<dbReference type="InParanoid" id="Q74H90"/>
<dbReference type="OrthoDB" id="9803889at2"/>
<dbReference type="Proteomes" id="UP000000577">
    <property type="component" value="Chromosome"/>
</dbReference>
<dbReference type="GO" id="GO:0005737">
    <property type="term" value="C:cytoplasm"/>
    <property type="evidence" value="ECO:0007669"/>
    <property type="project" value="UniProtKB-SubCell"/>
</dbReference>
<dbReference type="GO" id="GO:0005524">
    <property type="term" value="F:ATP binding"/>
    <property type="evidence" value="ECO:0007669"/>
    <property type="project" value="UniProtKB-UniRule"/>
</dbReference>
<dbReference type="GO" id="GO:0003697">
    <property type="term" value="F:single-stranded DNA binding"/>
    <property type="evidence" value="ECO:0007669"/>
    <property type="project" value="UniProtKB-UniRule"/>
</dbReference>
<dbReference type="GO" id="GO:0006260">
    <property type="term" value="P:DNA replication"/>
    <property type="evidence" value="ECO:0007669"/>
    <property type="project" value="UniProtKB-UniRule"/>
</dbReference>
<dbReference type="GO" id="GO:0000731">
    <property type="term" value="P:DNA synthesis involved in DNA repair"/>
    <property type="evidence" value="ECO:0000318"/>
    <property type="project" value="GO_Central"/>
</dbReference>
<dbReference type="GO" id="GO:0006302">
    <property type="term" value="P:double-strand break repair"/>
    <property type="evidence" value="ECO:0000318"/>
    <property type="project" value="GO_Central"/>
</dbReference>
<dbReference type="GO" id="GO:0009432">
    <property type="term" value="P:SOS response"/>
    <property type="evidence" value="ECO:0007669"/>
    <property type="project" value="UniProtKB-UniRule"/>
</dbReference>
<dbReference type="Gene3D" id="3.40.50.300">
    <property type="entry name" value="P-loop containing nucleotide triphosphate hydrolases"/>
    <property type="match status" value="1"/>
</dbReference>
<dbReference type="Gene3D" id="1.20.1050.90">
    <property type="entry name" value="RecF/RecN/SMC, N-terminal domain"/>
    <property type="match status" value="1"/>
</dbReference>
<dbReference type="HAMAP" id="MF_00365">
    <property type="entry name" value="RecF"/>
    <property type="match status" value="1"/>
</dbReference>
<dbReference type="InterPro" id="IPR001238">
    <property type="entry name" value="DNA-binding_RecF"/>
</dbReference>
<dbReference type="InterPro" id="IPR018078">
    <property type="entry name" value="DNA-binding_RecF_CS"/>
</dbReference>
<dbReference type="InterPro" id="IPR027417">
    <property type="entry name" value="P-loop_NTPase"/>
</dbReference>
<dbReference type="InterPro" id="IPR003395">
    <property type="entry name" value="RecF/RecN/SMC_N"/>
</dbReference>
<dbReference type="InterPro" id="IPR042174">
    <property type="entry name" value="RecF_2"/>
</dbReference>
<dbReference type="NCBIfam" id="TIGR00611">
    <property type="entry name" value="recf"/>
    <property type="match status" value="1"/>
</dbReference>
<dbReference type="PANTHER" id="PTHR32182">
    <property type="entry name" value="DNA REPLICATION AND REPAIR PROTEIN RECF"/>
    <property type="match status" value="1"/>
</dbReference>
<dbReference type="PANTHER" id="PTHR32182:SF0">
    <property type="entry name" value="DNA REPLICATION AND REPAIR PROTEIN RECF"/>
    <property type="match status" value="1"/>
</dbReference>
<dbReference type="Pfam" id="PF02463">
    <property type="entry name" value="SMC_N"/>
    <property type="match status" value="1"/>
</dbReference>
<dbReference type="SUPFAM" id="SSF52540">
    <property type="entry name" value="P-loop containing nucleoside triphosphate hydrolases"/>
    <property type="match status" value="1"/>
</dbReference>
<dbReference type="PROSITE" id="PS00618">
    <property type="entry name" value="RECF_2"/>
    <property type="match status" value="1"/>
</dbReference>
<organism>
    <name type="scientific">Geobacter sulfurreducens (strain ATCC 51573 / DSM 12127 / PCA)</name>
    <dbReference type="NCBI Taxonomy" id="243231"/>
    <lineage>
        <taxon>Bacteria</taxon>
        <taxon>Pseudomonadati</taxon>
        <taxon>Thermodesulfobacteriota</taxon>
        <taxon>Desulfuromonadia</taxon>
        <taxon>Geobacterales</taxon>
        <taxon>Geobacteraceae</taxon>
        <taxon>Geobacter</taxon>
    </lineage>
</organism>
<comment type="function">
    <text evidence="1">The RecF protein is involved in DNA metabolism; it is required for DNA replication and normal SOS inducibility. RecF binds preferentially to single-stranded, linear DNA. It also seems to bind ATP.</text>
</comment>
<comment type="subcellular location">
    <subcellularLocation>
        <location evidence="1">Cytoplasm</location>
    </subcellularLocation>
</comment>
<comment type="similarity">
    <text evidence="1">Belongs to the RecF family.</text>
</comment>